<protein>
    <recommendedName>
        <fullName>Uncharacterized protein MJ0787</fullName>
    </recommendedName>
</protein>
<keyword id="KW-1185">Reference proteome</keyword>
<evidence type="ECO:0000305" key="1"/>
<comment type="similarity">
    <text evidence="1">To M.thermoautotrophicum MTH1137.</text>
</comment>
<name>Y787_METJA</name>
<organism>
    <name type="scientific">Methanocaldococcus jannaschii (strain ATCC 43067 / DSM 2661 / JAL-1 / JCM 10045 / NBRC 100440)</name>
    <name type="common">Methanococcus jannaschii</name>
    <dbReference type="NCBI Taxonomy" id="243232"/>
    <lineage>
        <taxon>Archaea</taxon>
        <taxon>Methanobacteriati</taxon>
        <taxon>Methanobacteriota</taxon>
        <taxon>Methanomada group</taxon>
        <taxon>Methanococci</taxon>
        <taxon>Methanococcales</taxon>
        <taxon>Methanocaldococcaceae</taxon>
        <taxon>Methanocaldococcus</taxon>
    </lineage>
</organism>
<accession>Q58197</accession>
<proteinExistence type="predicted"/>
<gene>
    <name type="ordered locus">MJ0787</name>
</gene>
<feature type="chain" id="PRO_0000107037" description="Uncharacterized protein MJ0787">
    <location>
        <begin position="1"/>
        <end position="504"/>
    </location>
</feature>
<sequence length="504" mass="56128">MRELIKEAVNSLDSALELRKLIIKKLNEKKLKESDIIEIVDAVDDLSLEEIQKLGSNLRTFPMGCDLVEIAVGPCSSSLTLIQFIENCILTDYMGFPIHICSYAVADIAEKEGLKPIEVLKMVLENVDVPIDIDHFGMYGPMRFPKEITHCYGDCYFKGPPFKGCPRNRIHKRLIEKEKEHADEFEDWIKLASTLCINVVEEQGGEEHAAPLEEMKIVAETAKKYGKGLEGIFHIGDGYDDLITGIKACIDLDVDVFVVEGAPFNRAKNRLKAFAKAIAVSRILVKGGVVATNGAYEDECRVGLRSGLNTILTGFPLNHHGYMCGYSPKTAKRGNFGLRRVMRIIKEEIRAGNVNATFIDKDMVKAIALGNRFLKGNIYPYSIGGFYLGDAHWAAIKESNLCKKLKINKTIDDISAEKVGLIGGRYISWAIAEKAEEVYISDTDSWVEKATIKILNEAGINAYPCNGDDKKVLEADKAYITTFIPNIALKILNKLRDSKVELLI</sequence>
<dbReference type="EMBL" id="L77117">
    <property type="protein sequence ID" value="AAB98783.1"/>
    <property type="molecule type" value="Genomic_DNA"/>
</dbReference>
<dbReference type="PIR" id="C64398">
    <property type="entry name" value="C64398"/>
</dbReference>
<dbReference type="RefSeq" id="WP_010870294.1">
    <property type="nucleotide sequence ID" value="NC_000909.1"/>
</dbReference>
<dbReference type="FunCoup" id="Q58197">
    <property type="interactions" value="2"/>
</dbReference>
<dbReference type="STRING" id="243232.MJ_0787"/>
<dbReference type="PaxDb" id="243232-MJ_0787"/>
<dbReference type="EnsemblBacteria" id="AAB98783">
    <property type="protein sequence ID" value="AAB98783"/>
    <property type="gene ID" value="MJ_0787"/>
</dbReference>
<dbReference type="GeneID" id="1451666"/>
<dbReference type="KEGG" id="mja:MJ_0787"/>
<dbReference type="eggNOG" id="arCOG04861">
    <property type="taxonomic scope" value="Archaea"/>
</dbReference>
<dbReference type="HOGENOM" id="CLU_539284_0_0_2"/>
<dbReference type="InParanoid" id="Q58197"/>
<dbReference type="OrthoDB" id="114142at2157"/>
<dbReference type="Proteomes" id="UP000000805">
    <property type="component" value="Chromosome"/>
</dbReference>
<dbReference type="InterPro" id="IPR016760">
    <property type="entry name" value="HcgG-like"/>
</dbReference>
<dbReference type="NCBIfam" id="TIGR03958">
    <property type="entry name" value="monoFe_hyd_HmdC"/>
    <property type="match status" value="1"/>
</dbReference>
<dbReference type="Pfam" id="PF10113">
    <property type="entry name" value="Fibrillarin_2"/>
    <property type="match status" value="1"/>
</dbReference>
<dbReference type="PIRSF" id="PIRSF019375">
    <property type="entry name" value="UCP019375"/>
    <property type="match status" value="1"/>
</dbReference>
<reference key="1">
    <citation type="journal article" date="1996" name="Science">
        <title>Complete genome sequence of the methanogenic archaeon, Methanococcus jannaschii.</title>
        <authorList>
            <person name="Bult C.J."/>
            <person name="White O."/>
            <person name="Olsen G.J."/>
            <person name="Zhou L."/>
            <person name="Fleischmann R.D."/>
            <person name="Sutton G.G."/>
            <person name="Blake J.A."/>
            <person name="FitzGerald L.M."/>
            <person name="Clayton R.A."/>
            <person name="Gocayne J.D."/>
            <person name="Kerlavage A.R."/>
            <person name="Dougherty B.A."/>
            <person name="Tomb J.-F."/>
            <person name="Adams M.D."/>
            <person name="Reich C.I."/>
            <person name="Overbeek R."/>
            <person name="Kirkness E.F."/>
            <person name="Weinstock K.G."/>
            <person name="Merrick J.M."/>
            <person name="Glodek A."/>
            <person name="Scott J.L."/>
            <person name="Geoghagen N.S.M."/>
            <person name="Weidman J.F."/>
            <person name="Fuhrmann J.L."/>
            <person name="Nguyen D."/>
            <person name="Utterback T.R."/>
            <person name="Kelley J.M."/>
            <person name="Peterson J.D."/>
            <person name="Sadow P.W."/>
            <person name="Hanna M.C."/>
            <person name="Cotton M.D."/>
            <person name="Roberts K.M."/>
            <person name="Hurst M.A."/>
            <person name="Kaine B.P."/>
            <person name="Borodovsky M."/>
            <person name="Klenk H.-P."/>
            <person name="Fraser C.M."/>
            <person name="Smith H.O."/>
            <person name="Woese C.R."/>
            <person name="Venter J.C."/>
        </authorList>
    </citation>
    <scope>NUCLEOTIDE SEQUENCE [LARGE SCALE GENOMIC DNA]</scope>
    <source>
        <strain>ATCC 43067 / DSM 2661 / JAL-1 / JCM 10045 / NBRC 100440</strain>
    </source>
</reference>